<feature type="chain" id="PRO_0000106692" description="Uncharacterized protein MJ0096">
    <location>
        <begin position="1"/>
        <end position="262"/>
    </location>
</feature>
<feature type="transmembrane region" description="Helical" evidence="1">
    <location>
        <begin position="21"/>
        <end position="41"/>
    </location>
</feature>
<feature type="transmembrane region" description="Helical" evidence="1">
    <location>
        <begin position="94"/>
        <end position="114"/>
    </location>
</feature>
<feature type="transmembrane region" description="Helical" evidence="1">
    <location>
        <begin position="139"/>
        <end position="159"/>
    </location>
</feature>
<feature type="transmembrane region" description="Helical" evidence="1">
    <location>
        <begin position="164"/>
        <end position="184"/>
    </location>
</feature>
<feature type="transmembrane region" description="Helical" evidence="1">
    <location>
        <begin position="205"/>
        <end position="225"/>
    </location>
</feature>
<feature type="transmembrane region" description="Helical" evidence="1">
    <location>
        <begin position="240"/>
        <end position="260"/>
    </location>
</feature>
<organism>
    <name type="scientific">Methanocaldococcus jannaschii (strain ATCC 43067 / DSM 2661 / JAL-1 / JCM 10045 / NBRC 100440)</name>
    <name type="common">Methanococcus jannaschii</name>
    <dbReference type="NCBI Taxonomy" id="243232"/>
    <lineage>
        <taxon>Archaea</taxon>
        <taxon>Methanobacteriati</taxon>
        <taxon>Methanobacteriota</taxon>
        <taxon>Methanomada group</taxon>
        <taxon>Methanococci</taxon>
        <taxon>Methanococcales</taxon>
        <taxon>Methanocaldococcaceae</taxon>
        <taxon>Methanocaldococcus</taxon>
    </lineage>
</organism>
<sequence length="262" mass="29463">MEVKAMEIFKKYLSLNIPKKILITYFLCWAGFLFSFSVGKFLLYLSSILKSNFISEPAKLAQSVGTAKFNAVSSAVSNTVGVKNAYLTYALSYIVSNFMGCLIIMFALGALAYLYKKDLEKAKTLEEKEELFKCYQKYLLILFIFTVINPLTGLIGVNLQYSDLIAVLPHGFFEFFGFATAVVVGVELSNKILPIVKREITSKKIVILIACSFIFIFIAGMLEPIDWFIYSYAKAYGIPLLAAFATGYKNLFLYLISMLFKS</sequence>
<name>Y096_METJA</name>
<dbReference type="EMBL" id="L77117">
    <property type="protein sequence ID" value="AAB98087.1"/>
    <property type="molecule type" value="Genomic_DNA"/>
</dbReference>
<dbReference type="PIR" id="H64311">
    <property type="entry name" value="H64311"/>
</dbReference>
<dbReference type="RefSeq" id="WP_010869588.1">
    <property type="nucleotide sequence ID" value="NC_000909.1"/>
</dbReference>
<dbReference type="STRING" id="243232.MJ_0096"/>
<dbReference type="PaxDb" id="243232-MJ_0096"/>
<dbReference type="EnsemblBacteria" id="AAB98087">
    <property type="protein sequence ID" value="AAB98087"/>
    <property type="gene ID" value="MJ_0096"/>
</dbReference>
<dbReference type="GeneID" id="1450935"/>
<dbReference type="KEGG" id="mja:MJ_0096"/>
<dbReference type="eggNOG" id="arCOG05021">
    <property type="taxonomic scope" value="Archaea"/>
</dbReference>
<dbReference type="HOGENOM" id="CLU_1131620_0_0_2"/>
<dbReference type="InParanoid" id="Q57561"/>
<dbReference type="OrthoDB" id="65825at2157"/>
<dbReference type="Proteomes" id="UP000000805">
    <property type="component" value="Chromosome"/>
</dbReference>
<dbReference type="GO" id="GO:0005886">
    <property type="term" value="C:plasma membrane"/>
    <property type="evidence" value="ECO:0007669"/>
    <property type="project" value="UniProtKB-SubCell"/>
</dbReference>
<accession>Q57561</accession>
<evidence type="ECO:0000255" key="1"/>
<evidence type="ECO:0000305" key="2"/>
<keyword id="KW-1003">Cell membrane</keyword>
<keyword id="KW-0472">Membrane</keyword>
<keyword id="KW-1185">Reference proteome</keyword>
<keyword id="KW-0812">Transmembrane</keyword>
<keyword id="KW-1133">Transmembrane helix</keyword>
<proteinExistence type="predicted"/>
<gene>
    <name type="ordered locus">MJ0096</name>
</gene>
<comment type="subcellular location">
    <subcellularLocation>
        <location evidence="2">Cell membrane</location>
        <topology evidence="2">Multi-pass membrane protein</topology>
    </subcellularLocation>
</comment>
<reference key="1">
    <citation type="journal article" date="1996" name="Science">
        <title>Complete genome sequence of the methanogenic archaeon, Methanococcus jannaschii.</title>
        <authorList>
            <person name="Bult C.J."/>
            <person name="White O."/>
            <person name="Olsen G.J."/>
            <person name="Zhou L."/>
            <person name="Fleischmann R.D."/>
            <person name="Sutton G.G."/>
            <person name="Blake J.A."/>
            <person name="FitzGerald L.M."/>
            <person name="Clayton R.A."/>
            <person name="Gocayne J.D."/>
            <person name="Kerlavage A.R."/>
            <person name="Dougherty B.A."/>
            <person name="Tomb J.-F."/>
            <person name="Adams M.D."/>
            <person name="Reich C.I."/>
            <person name="Overbeek R."/>
            <person name="Kirkness E.F."/>
            <person name="Weinstock K.G."/>
            <person name="Merrick J.M."/>
            <person name="Glodek A."/>
            <person name="Scott J.L."/>
            <person name="Geoghagen N.S.M."/>
            <person name="Weidman J.F."/>
            <person name="Fuhrmann J.L."/>
            <person name="Nguyen D."/>
            <person name="Utterback T.R."/>
            <person name="Kelley J.M."/>
            <person name="Peterson J.D."/>
            <person name="Sadow P.W."/>
            <person name="Hanna M.C."/>
            <person name="Cotton M.D."/>
            <person name="Roberts K.M."/>
            <person name="Hurst M.A."/>
            <person name="Kaine B.P."/>
            <person name="Borodovsky M."/>
            <person name="Klenk H.-P."/>
            <person name="Fraser C.M."/>
            <person name="Smith H.O."/>
            <person name="Woese C.R."/>
            <person name="Venter J.C."/>
        </authorList>
    </citation>
    <scope>NUCLEOTIDE SEQUENCE [LARGE SCALE GENOMIC DNA]</scope>
    <source>
        <strain>ATCC 43067 / DSM 2661 / JAL-1 / JCM 10045 / NBRC 100440</strain>
    </source>
</reference>
<protein>
    <recommendedName>
        <fullName>Uncharacterized protein MJ0096</fullName>
    </recommendedName>
</protein>